<comment type="function">
    <text evidence="1">Plays a major role as an activator of AKT family members by inhibiting PPP2CA-mediated dephosphorylation, thereby keeping AKTs activated. Plays a role in preventing motor neuronal death and in accelerating the growth of pancreatic beta cells.</text>
</comment>
<comment type="subunit">
    <text evidence="1">Interacts (via C-terminal 330-amino-acid region) with AKT1; AKT2 and AKT3. Interacts with PPP2CA and PPP1CA.</text>
</comment>
<comment type="subcellular location">
    <subcellularLocation>
        <location evidence="2">Nucleus</location>
    </subcellularLocation>
    <subcellularLocation>
        <location evidence="1">Cytoplasm</location>
    </subcellularLocation>
    <text evidence="1">Colocalizes with KCTD20 in filamentous structures.</text>
</comment>
<accession>Q5R585</accession>
<evidence type="ECO:0000250" key="1">
    <source>
        <dbReference type="UniProtKB" id="Q80X66"/>
    </source>
</evidence>
<evidence type="ECO:0000250" key="2">
    <source>
        <dbReference type="UniProtKB" id="Q9BSF8"/>
    </source>
</evidence>
<evidence type="ECO:0000256" key="3">
    <source>
        <dbReference type="SAM" id="MobiDB-lite"/>
    </source>
</evidence>
<protein>
    <recommendedName>
        <fullName>BTB/POZ domain-containing protein 10</fullName>
    </recommendedName>
    <alternativeName>
        <fullName>Glucose metabolism-related protein 1</fullName>
    </alternativeName>
</protein>
<feature type="chain" id="PRO_0000228987" description="BTB/POZ domain-containing protein 10">
    <location>
        <begin position="1"/>
        <end position="475"/>
    </location>
</feature>
<feature type="domain" description="BTB">
    <location>
        <begin position="167"/>
        <end position="241"/>
    </location>
</feature>
<feature type="region of interest" description="Disordered" evidence="3">
    <location>
        <begin position="1"/>
        <end position="143"/>
    </location>
</feature>
<feature type="region of interest" description="Interaction with AKT family members" evidence="1">
    <location>
        <begin position="146"/>
        <end position="475"/>
    </location>
</feature>
<feature type="region of interest" description="Disordered" evidence="3">
    <location>
        <begin position="456"/>
        <end position="475"/>
    </location>
</feature>
<feature type="compositionally biased region" description="Basic residues" evidence="3">
    <location>
        <begin position="22"/>
        <end position="31"/>
    </location>
</feature>
<feature type="compositionally biased region" description="Basic and acidic residues" evidence="3">
    <location>
        <begin position="57"/>
        <end position="80"/>
    </location>
</feature>
<feature type="compositionally biased region" description="Polar residues" evidence="3">
    <location>
        <begin position="81"/>
        <end position="94"/>
    </location>
</feature>
<feature type="compositionally biased region" description="Basic and acidic residues" evidence="3">
    <location>
        <begin position="97"/>
        <end position="107"/>
    </location>
</feature>
<feature type="compositionally biased region" description="Low complexity" evidence="3">
    <location>
        <begin position="108"/>
        <end position="142"/>
    </location>
</feature>
<keyword id="KW-0963">Cytoplasm</keyword>
<keyword id="KW-0539">Nucleus</keyword>
<keyword id="KW-1185">Reference proteome</keyword>
<dbReference type="EMBL" id="CR860979">
    <property type="protein sequence ID" value="CAH93081.1"/>
    <property type="molecule type" value="mRNA"/>
</dbReference>
<dbReference type="RefSeq" id="NP_001127627.1">
    <property type="nucleotide sequence ID" value="NM_001134155.2"/>
</dbReference>
<dbReference type="SMR" id="Q5R585"/>
<dbReference type="STRING" id="9601.ENSPPYP00000003985"/>
<dbReference type="GeneID" id="100174706"/>
<dbReference type="KEGG" id="pon:100174706"/>
<dbReference type="CTD" id="84280"/>
<dbReference type="eggNOG" id="KOG3840">
    <property type="taxonomic scope" value="Eukaryota"/>
</dbReference>
<dbReference type="InParanoid" id="Q5R585"/>
<dbReference type="OrthoDB" id="10034757at2759"/>
<dbReference type="Proteomes" id="UP000001595">
    <property type="component" value="Unplaced"/>
</dbReference>
<dbReference type="GO" id="GO:0005737">
    <property type="term" value="C:cytoplasm"/>
    <property type="evidence" value="ECO:0000250"/>
    <property type="project" value="UniProtKB"/>
</dbReference>
<dbReference type="GO" id="GO:0005634">
    <property type="term" value="C:nucleus"/>
    <property type="evidence" value="ECO:0007669"/>
    <property type="project" value="UniProtKB-SubCell"/>
</dbReference>
<dbReference type="GO" id="GO:0051897">
    <property type="term" value="P:positive regulation of phosphatidylinositol 3-kinase/protein kinase B signal transduction"/>
    <property type="evidence" value="ECO:0000250"/>
    <property type="project" value="UniProtKB"/>
</dbReference>
<dbReference type="GO" id="GO:0042327">
    <property type="term" value="P:positive regulation of phosphorylation"/>
    <property type="evidence" value="ECO:0007669"/>
    <property type="project" value="TreeGrafter"/>
</dbReference>
<dbReference type="GO" id="GO:0044342">
    <property type="term" value="P:type B pancreatic cell proliferation"/>
    <property type="evidence" value="ECO:0000250"/>
    <property type="project" value="UniProtKB"/>
</dbReference>
<dbReference type="CDD" id="cd18385">
    <property type="entry name" value="BTB_POZ_BTBD10_GMRP1"/>
    <property type="match status" value="1"/>
</dbReference>
<dbReference type="FunFam" id="3.30.710.10:FF:000017">
    <property type="entry name" value="BTB/POZ domain-containing protein 10 isoform X1"/>
    <property type="match status" value="1"/>
</dbReference>
<dbReference type="Gene3D" id="3.30.710.10">
    <property type="entry name" value="Potassium Channel Kv1.1, Chain A"/>
    <property type="match status" value="1"/>
</dbReference>
<dbReference type="InterPro" id="IPR000210">
    <property type="entry name" value="BTB/POZ_dom"/>
</dbReference>
<dbReference type="InterPro" id="IPR039886">
    <property type="entry name" value="BTBD10/KCTD20"/>
</dbReference>
<dbReference type="InterPro" id="IPR039885">
    <property type="entry name" value="BTBD10/KCTD20_BTB/POZ"/>
</dbReference>
<dbReference type="InterPro" id="IPR011333">
    <property type="entry name" value="SKP1/BTB/POZ_sf"/>
</dbReference>
<dbReference type="PANTHER" id="PTHR21637">
    <property type="entry name" value="BTB/POZ DOMAIN-CONTAINING PROTEIN 10-RELATED"/>
    <property type="match status" value="1"/>
</dbReference>
<dbReference type="PANTHER" id="PTHR21637:SF5">
    <property type="entry name" value="BTB_POZ DOMAIN-CONTAINING PROTEIN 10"/>
    <property type="match status" value="1"/>
</dbReference>
<dbReference type="Pfam" id="PF16017">
    <property type="entry name" value="BTB_3"/>
    <property type="match status" value="1"/>
</dbReference>
<dbReference type="SMART" id="SM00225">
    <property type="entry name" value="BTB"/>
    <property type="match status" value="1"/>
</dbReference>
<dbReference type="SUPFAM" id="SSF54695">
    <property type="entry name" value="POZ domain"/>
    <property type="match status" value="1"/>
</dbReference>
<reference key="1">
    <citation type="submission" date="2004-11" db="EMBL/GenBank/DDBJ databases">
        <authorList>
            <consortium name="The German cDNA consortium"/>
        </authorList>
    </citation>
    <scope>NUCLEOTIDE SEQUENCE [LARGE SCALE MRNA]</scope>
    <source>
        <tissue>Brain cortex</tissue>
    </source>
</reference>
<organism>
    <name type="scientific">Pongo abelii</name>
    <name type="common">Sumatran orangutan</name>
    <name type="synonym">Pongo pygmaeus abelii</name>
    <dbReference type="NCBI Taxonomy" id="9601"/>
    <lineage>
        <taxon>Eukaryota</taxon>
        <taxon>Metazoa</taxon>
        <taxon>Chordata</taxon>
        <taxon>Craniata</taxon>
        <taxon>Vertebrata</taxon>
        <taxon>Euteleostomi</taxon>
        <taxon>Mammalia</taxon>
        <taxon>Eutheria</taxon>
        <taxon>Euarchontoglires</taxon>
        <taxon>Primates</taxon>
        <taxon>Haplorrhini</taxon>
        <taxon>Catarrhini</taxon>
        <taxon>Hominidae</taxon>
        <taxon>Pongo</taxon>
    </lineage>
</organism>
<gene>
    <name type="primary">BTBD10</name>
    <name type="synonym">GMRP1</name>
</gene>
<sequence>MAGRPHPYDGNSSDPENWDRKLHSRPRKLYKHSSTSSRIAKGGVDHTKMSLHGASGGHERSRDRRRSSDRSRDSSHERTESQLTPCIRNVTSPTRQHHVEREKDHSSSRPSSPRPQKASPNGSISSAGNSSRNSSQSSSDGSCKTAGEMVFVYENAKEGARNIRTSERVTLIVDNTRFVVDPSIFTAQPNTMLGRMFGSGREHNFTRPNEKGEYEVAEGIGSTVFRAILDYYKTGIIRCPDGISIPELREACDYLCISFEYSTIKCRDLSALMHELSNDGARRQFEFYLEEMILPLMVASAQSGERECHIVVLTDDDVVDWDEEYPPQMGEEYSQIIYSTKLYRFFKYIENRDVAKSVLKERGLKKIRLGIEGYPTYKEKVKKRPGGRPEVIYNYVQRPFIRMSWEKEEGKSRHVDFQCVKSKSITNLAAAAADIPQDQLVVMHPTPQVDELDILPIHPPSGNSDLDPDAQNPTL</sequence>
<proteinExistence type="evidence at transcript level"/>
<name>BTBDA_PONAB</name>